<organism>
    <name type="scientific">Rattus norvegicus</name>
    <name type="common">Rat</name>
    <dbReference type="NCBI Taxonomy" id="10116"/>
    <lineage>
        <taxon>Eukaryota</taxon>
        <taxon>Metazoa</taxon>
        <taxon>Chordata</taxon>
        <taxon>Craniata</taxon>
        <taxon>Vertebrata</taxon>
        <taxon>Euteleostomi</taxon>
        <taxon>Mammalia</taxon>
        <taxon>Eutheria</taxon>
        <taxon>Euarchontoglires</taxon>
        <taxon>Glires</taxon>
        <taxon>Rodentia</taxon>
        <taxon>Myomorpha</taxon>
        <taxon>Muroidea</taxon>
        <taxon>Muridae</taxon>
        <taxon>Murinae</taxon>
        <taxon>Rattus</taxon>
    </lineage>
</organism>
<comment type="subcellular location">
    <subcellularLocation>
        <location evidence="3">Membrane</location>
        <topology evidence="3">Multi-pass membrane protein</topology>
    </subcellularLocation>
</comment>
<comment type="similarity">
    <text evidence="3">Belongs to the TMEM255 family.</text>
</comment>
<reference key="1">
    <citation type="submission" date="2003-06" db="EMBL/GenBank/DDBJ databases">
        <authorList>
            <person name="Shan Y.X."/>
            <person name="Yu L."/>
        </authorList>
    </citation>
    <scope>NUCLEOTIDE SEQUENCE [MRNA]</scope>
    <source>
        <strain>Sprague-Dawley</strain>
        <tissue>Spinal ganglion</tissue>
    </source>
</reference>
<reference key="2">
    <citation type="journal article" date="2012" name="Nat. Commun.">
        <title>Quantitative maps of protein phosphorylation sites across 14 different rat organs and tissues.</title>
        <authorList>
            <person name="Lundby A."/>
            <person name="Secher A."/>
            <person name="Lage K."/>
            <person name="Nordsborg N.B."/>
            <person name="Dmytriyev A."/>
            <person name="Lundby C."/>
            <person name="Olsen J.V."/>
        </authorList>
    </citation>
    <scope>IDENTIFICATION BY MASS SPECTROMETRY [LARGE SCALE ANALYSIS]</scope>
</reference>
<keyword id="KW-0472">Membrane</keyword>
<keyword id="KW-1185">Reference proteome</keyword>
<keyword id="KW-0812">Transmembrane</keyword>
<keyword id="KW-1133">Transmembrane helix</keyword>
<sequence>MHQSLTQQRSSDMSLPDSMGAFNRRKRNSIYVTVTLLIVSVLILTVGLAATTRTQNVTVGGYYPGVILGFGSFLGIIGSNLIENKRQMLVASIVFISFGVIAAFCCAIVDGVFAARHIDLKPLYANRCHYVPKTSQKEAEEVITSSSKITPSTRALRNLTQAVKEVNCPQLSRGLCTPRIRGNTCFCCDLYNCGNRVEITGGYYEYIDVSSCQDIIHLYHLLWSATILNIVGLFLGIITAAVLGGFKDMNPTRPALNCSVENAHPTVSYYARPQVASYNTYYHSPPHLPPYSAYDFQHSGVFPSSPPSGLSDEQEPQSPSPSPSYMWSSSAPPRYSPPYYPPFEKPPPYSP</sequence>
<gene>
    <name type="primary">Tmem255a</name>
    <name type="synonym">Fam70a</name>
</gene>
<name>T255A_RAT</name>
<proteinExistence type="evidence at protein level"/>
<feature type="chain" id="PRO_0000266040" description="Transmembrane protein 255A">
    <location>
        <begin position="1"/>
        <end position="351"/>
    </location>
</feature>
<feature type="transmembrane region" description="Helical" evidence="1">
    <location>
        <begin position="30"/>
        <end position="50"/>
    </location>
</feature>
<feature type="transmembrane region" description="Helical" evidence="1">
    <location>
        <begin position="57"/>
        <end position="77"/>
    </location>
</feature>
<feature type="transmembrane region" description="Helical" evidence="1">
    <location>
        <begin position="89"/>
        <end position="109"/>
    </location>
</feature>
<feature type="transmembrane region" description="Helical" evidence="1">
    <location>
        <begin position="226"/>
        <end position="246"/>
    </location>
</feature>
<feature type="region of interest" description="Disordered" evidence="2">
    <location>
        <begin position="302"/>
        <end position="331"/>
    </location>
</feature>
<dbReference type="EMBL" id="AY327410">
    <property type="protein sequence ID" value="AAP92802.1"/>
    <property type="molecule type" value="mRNA"/>
</dbReference>
<dbReference type="FunCoup" id="Q7TMP6">
    <property type="interactions" value="68"/>
</dbReference>
<dbReference type="STRING" id="10116.ENSRNOP00000032797"/>
<dbReference type="GlyGen" id="Q7TMP6">
    <property type="glycosylation" value="1 site"/>
</dbReference>
<dbReference type="PhosphoSitePlus" id="Q7TMP6"/>
<dbReference type="PaxDb" id="10116-ENSRNOP00000032797"/>
<dbReference type="UCSC" id="RGD:727788">
    <property type="organism name" value="rat"/>
</dbReference>
<dbReference type="AGR" id="RGD:727788"/>
<dbReference type="RGD" id="727788">
    <property type="gene designation" value="Tmem255a"/>
</dbReference>
<dbReference type="eggNOG" id="ENOG502QVX8">
    <property type="taxonomic scope" value="Eukaryota"/>
</dbReference>
<dbReference type="InParanoid" id="Q7TMP6"/>
<dbReference type="PhylomeDB" id="Q7TMP6"/>
<dbReference type="PRO" id="PR:Q7TMP6"/>
<dbReference type="Proteomes" id="UP000002494">
    <property type="component" value="Unplaced"/>
</dbReference>
<dbReference type="GO" id="GO:0016020">
    <property type="term" value="C:membrane"/>
    <property type="evidence" value="ECO:0007669"/>
    <property type="project" value="UniProtKB-SubCell"/>
</dbReference>
<dbReference type="GO" id="GO:0009617">
    <property type="term" value="P:response to bacterium"/>
    <property type="evidence" value="ECO:0000266"/>
    <property type="project" value="RGD"/>
</dbReference>
<dbReference type="InterPro" id="IPR028014">
    <property type="entry name" value="TMEM255"/>
</dbReference>
<dbReference type="PANTHER" id="PTHR33721:SF1">
    <property type="entry name" value="TRANSMEMBRANE PROTEIN 255A"/>
    <property type="match status" value="1"/>
</dbReference>
<dbReference type="PANTHER" id="PTHR33721">
    <property type="entry name" value="TRANSMEMBRANE PROTEIN 255B-LIKE"/>
    <property type="match status" value="1"/>
</dbReference>
<dbReference type="Pfam" id="PF14967">
    <property type="entry name" value="FAM70"/>
    <property type="match status" value="1"/>
</dbReference>
<protein>
    <recommendedName>
        <fullName>Transmembrane protein 255A</fullName>
    </recommendedName>
    <alternativeName>
        <fullName>Protein FAM70A</fullName>
    </alternativeName>
</protein>
<evidence type="ECO:0000255" key="1"/>
<evidence type="ECO:0000256" key="2">
    <source>
        <dbReference type="SAM" id="MobiDB-lite"/>
    </source>
</evidence>
<evidence type="ECO:0000305" key="3"/>
<accession>Q7TMP6</accession>